<feature type="chain" id="PRO_0000322165" description="U-box domain-containing protein 21">
    <location>
        <begin position="1"/>
        <end position="435"/>
    </location>
</feature>
<feature type="domain" description="U-box">
    <location>
        <begin position="30"/>
        <end position="104"/>
    </location>
</feature>
<feature type="repeat" description="ARM 1">
    <location>
        <begin position="202"/>
        <end position="241"/>
    </location>
</feature>
<feature type="repeat" description="ARM 2">
    <location>
        <begin position="245"/>
        <end position="285"/>
    </location>
</feature>
<feature type="repeat" description="ARM 3">
    <location>
        <begin position="288"/>
        <end position="327"/>
    </location>
</feature>
<feature type="repeat" description="ARM 4">
    <location>
        <begin position="329"/>
        <end position="369"/>
    </location>
</feature>
<comment type="function">
    <text evidence="1">Functions as an E3 ubiquitin ligase.</text>
</comment>
<comment type="catalytic activity">
    <reaction>
        <text>S-ubiquitinyl-[E2 ubiquitin-conjugating enzyme]-L-cysteine + [acceptor protein]-L-lysine = [E2 ubiquitin-conjugating enzyme]-L-cysteine + N(6)-ubiquitinyl-[acceptor protein]-L-lysine.</text>
        <dbReference type="EC" id="2.3.2.27"/>
    </reaction>
</comment>
<comment type="pathway">
    <text>Protein modification; protein ubiquitination.</text>
</comment>
<comment type="sequence caution" evidence="2">
    <conflict type="erroneous gene model prediction">
        <sequence resource="EMBL-CDS" id="BAB10667"/>
    </conflict>
</comment>
<reference key="1">
    <citation type="submission" date="1999-04" db="EMBL/GenBank/DDBJ databases">
        <title>Structural analysis of Arabidopsis thaliana chromosome 5. XI.</title>
        <authorList>
            <person name="Kaneko T."/>
            <person name="Katoh T."/>
            <person name="Asamizu E."/>
            <person name="Sato S."/>
            <person name="Nakamura Y."/>
            <person name="Kotani H."/>
            <person name="Tabata S."/>
        </authorList>
    </citation>
    <scope>NUCLEOTIDE SEQUENCE [LARGE SCALE GENOMIC DNA]</scope>
    <source>
        <strain>cv. Columbia</strain>
    </source>
</reference>
<reference key="2">
    <citation type="journal article" date="2017" name="Plant J.">
        <title>Araport11: a complete reannotation of the Arabidopsis thaliana reference genome.</title>
        <authorList>
            <person name="Cheng C.Y."/>
            <person name="Krishnakumar V."/>
            <person name="Chan A.P."/>
            <person name="Thibaud-Nissen F."/>
            <person name="Schobel S."/>
            <person name="Town C.D."/>
        </authorList>
    </citation>
    <scope>GENOME REANNOTATION</scope>
    <source>
        <strain>cv. Columbia</strain>
    </source>
</reference>
<reference key="3">
    <citation type="submission" date="2004-12" db="EMBL/GenBank/DDBJ databases">
        <title>Arabidopsis ORF clones.</title>
        <authorList>
            <person name="Cheuk R.F."/>
            <person name="Chen H."/>
            <person name="Kim C.J."/>
            <person name="Shinn P."/>
            <person name="Ecker J.R."/>
        </authorList>
    </citation>
    <scope>NUCLEOTIDE SEQUENCE [LARGE SCALE MRNA]</scope>
    <source>
        <strain>cv. Columbia</strain>
    </source>
</reference>
<reference key="4">
    <citation type="journal article" date="2001" name="Trends Plant Sci.">
        <title>The U-box protein family in plants.</title>
        <authorList>
            <person name="Azevedo C."/>
            <person name="Santos-Rosa M.J."/>
            <person name="Shirasu K."/>
        </authorList>
    </citation>
    <scope>GENE FAMILY ORGANIZATION</scope>
    <scope>NOMENCLATURE</scope>
</reference>
<reference key="5">
    <citation type="journal article" date="2004" name="Plant Physiol.">
        <title>A large complement of the predicted Arabidopsis ARM repeat proteins are members of the U-box E3 ubiquitin ligase family.</title>
        <authorList>
            <person name="Mudgil Y."/>
            <person name="Shiu S.-H."/>
            <person name="Stone S.L."/>
            <person name="Salt J.N."/>
            <person name="Goring D.R."/>
        </authorList>
    </citation>
    <scope>GENE FAMILY ORGANIZATION</scope>
</reference>
<gene>
    <name type="primary">PUB21</name>
    <name type="ordered locus">At5g37490</name>
    <name type="ORF">MPA22.3</name>
</gene>
<keyword id="KW-1185">Reference proteome</keyword>
<keyword id="KW-0677">Repeat</keyword>
<keyword id="KW-0808">Transferase</keyword>
<keyword id="KW-0833">Ubl conjugation pathway</keyword>
<proteinExistence type="evidence at transcript level"/>
<dbReference type="EC" id="2.3.2.27"/>
<dbReference type="EMBL" id="AB025630">
    <property type="protein sequence ID" value="BAB10667.1"/>
    <property type="status" value="ALT_SEQ"/>
    <property type="molecule type" value="Genomic_DNA"/>
</dbReference>
<dbReference type="EMBL" id="CP002688">
    <property type="protein sequence ID" value="AED94197.1"/>
    <property type="molecule type" value="Genomic_DNA"/>
</dbReference>
<dbReference type="EMBL" id="BT020311">
    <property type="protein sequence ID" value="AAV85666.1"/>
    <property type="molecule type" value="mRNA"/>
</dbReference>
<dbReference type="EMBL" id="BT020439">
    <property type="protein sequence ID" value="AAW30018.1"/>
    <property type="molecule type" value="mRNA"/>
</dbReference>
<dbReference type="RefSeq" id="NP_198565.1">
    <property type="nucleotide sequence ID" value="NM_123108.4"/>
</dbReference>
<dbReference type="SMR" id="Q5PNY6"/>
<dbReference type="FunCoup" id="Q5PNY6">
    <property type="interactions" value="2"/>
</dbReference>
<dbReference type="STRING" id="3702.Q5PNY6"/>
<dbReference type="iPTMnet" id="Q5PNY6"/>
<dbReference type="PaxDb" id="3702-AT5G37490.1"/>
<dbReference type="EnsemblPlants" id="AT5G37490.1">
    <property type="protein sequence ID" value="AT5G37490.1"/>
    <property type="gene ID" value="AT5G37490"/>
</dbReference>
<dbReference type="GeneID" id="833727"/>
<dbReference type="Gramene" id="AT5G37490.1">
    <property type="protein sequence ID" value="AT5G37490.1"/>
    <property type="gene ID" value="AT5G37490"/>
</dbReference>
<dbReference type="KEGG" id="ath:AT5G37490"/>
<dbReference type="Araport" id="AT5G37490"/>
<dbReference type="TAIR" id="AT5G37490"/>
<dbReference type="eggNOG" id="ENOG502QS2D">
    <property type="taxonomic scope" value="Eukaryota"/>
</dbReference>
<dbReference type="HOGENOM" id="CLU_006348_1_1_1"/>
<dbReference type="InParanoid" id="Q5PNY6"/>
<dbReference type="OMA" id="DAICETE"/>
<dbReference type="PhylomeDB" id="Q5PNY6"/>
<dbReference type="UniPathway" id="UPA00143"/>
<dbReference type="PRO" id="PR:Q5PNY6"/>
<dbReference type="Proteomes" id="UP000006548">
    <property type="component" value="Chromosome 5"/>
</dbReference>
<dbReference type="ExpressionAtlas" id="Q5PNY6">
    <property type="expression patterns" value="baseline and differential"/>
</dbReference>
<dbReference type="GO" id="GO:0061630">
    <property type="term" value="F:ubiquitin protein ligase activity"/>
    <property type="evidence" value="ECO:0007669"/>
    <property type="project" value="InterPro"/>
</dbReference>
<dbReference type="GO" id="GO:0016567">
    <property type="term" value="P:protein ubiquitination"/>
    <property type="evidence" value="ECO:0007669"/>
    <property type="project" value="UniProtKB-UniPathway"/>
</dbReference>
<dbReference type="CDD" id="cd16664">
    <property type="entry name" value="RING-Ubox_PUB"/>
    <property type="match status" value="1"/>
</dbReference>
<dbReference type="FunFam" id="1.25.10.10:FF:001094">
    <property type="entry name" value="RING-type E3 ubiquitin transferase"/>
    <property type="match status" value="1"/>
</dbReference>
<dbReference type="FunFam" id="3.30.40.10:FF:000437">
    <property type="entry name" value="RING-type E3 ubiquitin transferase"/>
    <property type="match status" value="1"/>
</dbReference>
<dbReference type="Gene3D" id="1.25.10.10">
    <property type="entry name" value="Leucine-rich Repeat Variant"/>
    <property type="match status" value="1"/>
</dbReference>
<dbReference type="Gene3D" id="3.30.40.10">
    <property type="entry name" value="Zinc/RING finger domain, C3HC4 (zinc finger)"/>
    <property type="match status" value="1"/>
</dbReference>
<dbReference type="InterPro" id="IPR011989">
    <property type="entry name" value="ARM-like"/>
</dbReference>
<dbReference type="InterPro" id="IPR016024">
    <property type="entry name" value="ARM-type_fold"/>
</dbReference>
<dbReference type="InterPro" id="IPR045185">
    <property type="entry name" value="PUB22/23/24-like"/>
</dbReference>
<dbReference type="InterPro" id="IPR045210">
    <property type="entry name" value="RING-Ubox_PUB"/>
</dbReference>
<dbReference type="InterPro" id="IPR003613">
    <property type="entry name" value="Ubox_domain"/>
</dbReference>
<dbReference type="InterPro" id="IPR013083">
    <property type="entry name" value="Znf_RING/FYVE/PHD"/>
</dbReference>
<dbReference type="PANTHER" id="PTHR22849:SF61">
    <property type="entry name" value="U-BOX DOMAIN-CONTAINING PROTEIN 21"/>
    <property type="match status" value="1"/>
</dbReference>
<dbReference type="PANTHER" id="PTHR22849">
    <property type="entry name" value="WDSAM1 PROTEIN"/>
    <property type="match status" value="1"/>
</dbReference>
<dbReference type="Pfam" id="PF04564">
    <property type="entry name" value="U-box"/>
    <property type="match status" value="1"/>
</dbReference>
<dbReference type="SMART" id="SM00504">
    <property type="entry name" value="Ubox"/>
    <property type="match status" value="1"/>
</dbReference>
<dbReference type="SUPFAM" id="SSF48371">
    <property type="entry name" value="ARM repeat"/>
    <property type="match status" value="1"/>
</dbReference>
<dbReference type="SUPFAM" id="SSF57850">
    <property type="entry name" value="RING/U-box"/>
    <property type="match status" value="1"/>
</dbReference>
<dbReference type="PROSITE" id="PS51698">
    <property type="entry name" value="U_BOX"/>
    <property type="match status" value="1"/>
</dbReference>
<accession>Q5PNY6</accession>
<accession>Q9FGI7</accession>
<sequence>MGFLWRTRSNEKKITPVLSWPESEPESEITIPPEFQCPISIDLMKDPVIISTGITYDRVSIETWINSGNKTCPVTNTVLTTFDQIPNHTIRKMIQGWCVEKGSPLIQRIPTPRVPLMPCEVYEISRKLSSATRRGDYEKCGVIIEKIKKLGDESEKNRKCVNENSVGWVLCDCFDKFSGDEKLTFMLNEILSLLTWMFPIGLEGISKLASATSFRCVAGLLKSTDDSVRQNAAFIMKEILSLDETRVHSFAVENGVAEALVKLIRDSVSSSSTKSSLIAIYQMVLQKPEIASEFLEIGLVSITVEMIVDAENSVCEKALAVLDAICETEHGREEVRKNALVMPLLVKKIAKVSELATRSSMSMILKLWKTGNTVAVEDAVRLGAFQKVLLVLQVGYGEETKEKATELLKMMNTQMKLMSDCVDSLKEFKYIKKPF</sequence>
<organism>
    <name type="scientific">Arabidopsis thaliana</name>
    <name type="common">Mouse-ear cress</name>
    <dbReference type="NCBI Taxonomy" id="3702"/>
    <lineage>
        <taxon>Eukaryota</taxon>
        <taxon>Viridiplantae</taxon>
        <taxon>Streptophyta</taxon>
        <taxon>Embryophyta</taxon>
        <taxon>Tracheophyta</taxon>
        <taxon>Spermatophyta</taxon>
        <taxon>Magnoliopsida</taxon>
        <taxon>eudicotyledons</taxon>
        <taxon>Gunneridae</taxon>
        <taxon>Pentapetalae</taxon>
        <taxon>rosids</taxon>
        <taxon>malvids</taxon>
        <taxon>Brassicales</taxon>
        <taxon>Brassicaceae</taxon>
        <taxon>Camelineae</taxon>
        <taxon>Arabidopsis</taxon>
    </lineage>
</organism>
<protein>
    <recommendedName>
        <fullName>U-box domain-containing protein 21</fullName>
        <ecNumber>2.3.2.27</ecNumber>
    </recommendedName>
    <alternativeName>
        <fullName>Plant U-box protein 21</fullName>
    </alternativeName>
    <alternativeName>
        <fullName evidence="2">RING-type E3 ubiquitin transferase PUB21</fullName>
    </alternativeName>
</protein>
<evidence type="ECO:0000250" key="1"/>
<evidence type="ECO:0000305" key="2"/>
<name>PUB21_ARATH</name>